<evidence type="ECO:0000255" key="1"/>
<evidence type="ECO:0000305" key="2"/>
<proteinExistence type="predicted"/>
<feature type="chain" id="PRO_0000128082" description="Uncharacterized protein AF_2010">
    <location>
        <begin position="1"/>
        <end position="232"/>
    </location>
</feature>
<feature type="transmembrane region" description="Helical" evidence="1">
    <location>
        <begin position="10"/>
        <end position="32"/>
    </location>
</feature>
<protein>
    <recommendedName>
        <fullName>Uncharacterized protein AF_2010</fullName>
    </recommendedName>
</protein>
<name>Y2010_ARCFU</name>
<comment type="subcellular location">
    <subcellularLocation>
        <location evidence="2">Membrane</location>
        <topology evidence="2">Single-pass membrane protein</topology>
    </subcellularLocation>
</comment>
<sequence length="232" mass="26339">MSPDTEEQTGLTIYLYPVIAWIILVTKIESGLRTRTFPVVHGDEGNNLIPLPEDVKNIRIVQSWPDTFLAKATVGAETIDMGIHVSPDVEALKKEAIELIKHKGSLRKAKKDAERESIVSGWFQSKFQSELLNLKKGWRIRGIVRAESPESKTLFNIELIKRVERRKDASHLRSGVFTPYQKSRIEDIPLSQRKIEPGEVDVPIPYDGIYRIAISPNVKTTYFVELFVEKGS</sequence>
<accession>O28269</accession>
<gene>
    <name type="ordered locus">AF_2010</name>
</gene>
<keyword id="KW-0472">Membrane</keyword>
<keyword id="KW-1185">Reference proteome</keyword>
<keyword id="KW-0812">Transmembrane</keyword>
<keyword id="KW-1133">Transmembrane helix</keyword>
<organism>
    <name type="scientific">Archaeoglobus fulgidus (strain ATCC 49558 / DSM 4304 / JCM 9628 / NBRC 100126 / VC-16)</name>
    <dbReference type="NCBI Taxonomy" id="224325"/>
    <lineage>
        <taxon>Archaea</taxon>
        <taxon>Methanobacteriati</taxon>
        <taxon>Methanobacteriota</taxon>
        <taxon>Archaeoglobi</taxon>
        <taxon>Archaeoglobales</taxon>
        <taxon>Archaeoglobaceae</taxon>
        <taxon>Archaeoglobus</taxon>
    </lineage>
</organism>
<dbReference type="EMBL" id="AE000782">
    <property type="protein sequence ID" value="AAB89255.1"/>
    <property type="molecule type" value="Genomic_DNA"/>
</dbReference>
<dbReference type="PIR" id="A69501">
    <property type="entry name" value="A69501"/>
</dbReference>
<dbReference type="RefSeq" id="WP_010879502.1">
    <property type="nucleotide sequence ID" value="NC_000917.1"/>
</dbReference>
<dbReference type="STRING" id="224325.AF_2010"/>
<dbReference type="PaxDb" id="224325-AF_2010"/>
<dbReference type="EnsemblBacteria" id="AAB89255">
    <property type="protein sequence ID" value="AAB89255"/>
    <property type="gene ID" value="AF_2010"/>
</dbReference>
<dbReference type="GeneID" id="1485235"/>
<dbReference type="KEGG" id="afu:AF_2010"/>
<dbReference type="HOGENOM" id="CLU_1192578_0_0_2"/>
<dbReference type="Proteomes" id="UP000002199">
    <property type="component" value="Chromosome"/>
</dbReference>
<dbReference type="GO" id="GO:0016020">
    <property type="term" value="C:membrane"/>
    <property type="evidence" value="ECO:0007669"/>
    <property type="project" value="UniProtKB-SubCell"/>
</dbReference>
<reference key="1">
    <citation type="journal article" date="1997" name="Nature">
        <title>The complete genome sequence of the hyperthermophilic, sulphate-reducing archaeon Archaeoglobus fulgidus.</title>
        <authorList>
            <person name="Klenk H.-P."/>
            <person name="Clayton R.A."/>
            <person name="Tomb J.-F."/>
            <person name="White O."/>
            <person name="Nelson K.E."/>
            <person name="Ketchum K.A."/>
            <person name="Dodson R.J."/>
            <person name="Gwinn M.L."/>
            <person name="Hickey E.K."/>
            <person name="Peterson J.D."/>
            <person name="Richardson D.L."/>
            <person name="Kerlavage A.R."/>
            <person name="Graham D.E."/>
            <person name="Kyrpides N.C."/>
            <person name="Fleischmann R.D."/>
            <person name="Quackenbush J."/>
            <person name="Lee N.H."/>
            <person name="Sutton G.G."/>
            <person name="Gill S.R."/>
            <person name="Kirkness E.F."/>
            <person name="Dougherty B.A."/>
            <person name="McKenney K."/>
            <person name="Adams M.D."/>
            <person name="Loftus B.J."/>
            <person name="Peterson S.N."/>
            <person name="Reich C.I."/>
            <person name="McNeil L.K."/>
            <person name="Badger J.H."/>
            <person name="Glodek A."/>
            <person name="Zhou L."/>
            <person name="Overbeek R."/>
            <person name="Gocayne J.D."/>
            <person name="Weidman J.F."/>
            <person name="McDonald L.A."/>
            <person name="Utterback T.R."/>
            <person name="Cotton M.D."/>
            <person name="Spriggs T."/>
            <person name="Artiach P."/>
            <person name="Kaine B.P."/>
            <person name="Sykes S.M."/>
            <person name="Sadow P.W."/>
            <person name="D'Andrea K.P."/>
            <person name="Bowman C."/>
            <person name="Fujii C."/>
            <person name="Garland S.A."/>
            <person name="Mason T.M."/>
            <person name="Olsen G.J."/>
            <person name="Fraser C.M."/>
            <person name="Smith H.O."/>
            <person name="Woese C.R."/>
            <person name="Venter J.C."/>
        </authorList>
    </citation>
    <scope>NUCLEOTIDE SEQUENCE [LARGE SCALE GENOMIC DNA]</scope>
    <source>
        <strain>ATCC 49558 / DSM 4304 / JCM 9628 / NBRC 100126 / VC-16</strain>
    </source>
</reference>